<evidence type="ECO:0000269" key="1">
    <source>
    </source>
</evidence>
<evidence type="ECO:0000303" key="2">
    <source>
    </source>
</evidence>
<evidence type="ECO:0000303" key="3">
    <source>
    </source>
</evidence>
<evidence type="ECO:0000305" key="4"/>
<organism>
    <name type="scientific">Pithecopus azureus</name>
    <name type="common">Orange-legged monkey tree frog</name>
    <name type="synonym">Phyllomedusa azurea</name>
    <dbReference type="NCBI Taxonomy" id="2034991"/>
    <lineage>
        <taxon>Eukaryota</taxon>
        <taxon>Metazoa</taxon>
        <taxon>Chordata</taxon>
        <taxon>Craniata</taxon>
        <taxon>Vertebrata</taxon>
        <taxon>Euteleostomi</taxon>
        <taxon>Amphibia</taxon>
        <taxon>Batrachia</taxon>
        <taxon>Anura</taxon>
        <taxon>Neobatrachia</taxon>
        <taxon>Hyloidea</taxon>
        <taxon>Hylidae</taxon>
        <taxon>Phyllomedusinae</taxon>
        <taxon>Pithecopus</taxon>
    </lineage>
</organism>
<comment type="subcellular location">
    <subcellularLocation>
        <location evidence="1">Secreted</location>
    </subcellularLocation>
</comment>
<comment type="tissue specificity">
    <text evidence="1">Expressed by the skin glands.</text>
</comment>
<comment type="mass spectrometry"/>
<comment type="similarity">
    <text evidence="4">Belongs to the frog skin active peptide (FSAP) family. Hyposin subfamily.</text>
</comment>
<comment type="online information" name="The antimicrobial peptide database">
    <link uri="https://wangapd3.com/database/query_output.php?ID=00903"/>
</comment>
<reference evidence="4" key="1">
    <citation type="journal article" date="2007" name="J. Proteome Res.">
        <title>Amphibian skin secretomics: application of parallel quadrupole time-of-flight mass spectrometry and peptide precursor cDNA cloning to rapidly characterize the skin secretory peptidome of Phyllomedusa hypochondrialis azurea: discovery of a novel peptide family, the hyposins.</title>
        <authorList>
            <person name="Thompson A.H."/>
            <person name="Bjourson A.J."/>
            <person name="Orr D.F."/>
            <person name="Shaw C."/>
            <person name="McClean S."/>
        </authorList>
    </citation>
    <scope>PROTEIN SEQUENCE</scope>
    <scope>SUBCELLULAR LOCATION</scope>
    <scope>TISSUE SPECIFICITY</scope>
    <scope>MASS SPECTROMETRY</scope>
    <scope>AMIDATION AT LYS-11</scope>
    <source>
        <tissue evidence="1">Skin secretion</tissue>
    </source>
</reference>
<reference key="2">
    <citation type="journal article" date="2008" name="Peptides">
        <title>A consistent nomenclature of antimicrobial peptides isolated from frogs of the subfamily Phyllomedusinae.</title>
        <authorList>
            <person name="Amiche M."/>
            <person name="Ladram A."/>
            <person name="Nicolas P."/>
        </authorList>
    </citation>
    <scope>NOMENCLATURE</scope>
</reference>
<sequence>LRPAFIRPKGK</sequence>
<protein>
    <recommendedName>
        <fullName evidence="3">Hyposin-H2</fullName>
        <shortName evidence="3">HPS-H2</shortName>
    </recommendedName>
    <alternativeName>
        <fullName evidence="3">Hyposin-2</fullName>
    </alternativeName>
    <alternativeName>
        <fullName evidence="2">Hyposin-HA2</fullName>
    </alternativeName>
</protein>
<proteinExistence type="evidence at protein level"/>
<dbReference type="GO" id="GO:0005576">
    <property type="term" value="C:extracellular region"/>
    <property type="evidence" value="ECO:0007669"/>
    <property type="project" value="UniProtKB-SubCell"/>
</dbReference>
<keyword id="KW-0027">Amidation</keyword>
<keyword id="KW-0903">Direct protein sequencing</keyword>
<keyword id="KW-0964">Secreted</keyword>
<accession>P84955</accession>
<feature type="peptide" id="PRO_0000250430" description="Hyposin-H2" evidence="1">
    <location>
        <begin position="1"/>
        <end position="11"/>
    </location>
</feature>
<feature type="modified residue" description="Lysine amide" evidence="1">
    <location>
        <position position="11"/>
    </location>
</feature>
<name>HPS2_PITAZ</name>